<gene>
    <name evidence="1" type="primary">gpmI</name>
    <name type="synonym">pgm</name>
    <name type="ordered locus">lin2550</name>
</gene>
<sequence>MSKSPVAIIILDGFGKRAETVGNAVAQANKPNFDRYWANFPHGELKAAGLDVGLPEGQMGNSEVGHTNIGAGRIVYQSLTRIDKAIEEGEFQENKALNNAFTHTKENNSDLHLFGLLSDGGVHSHINHLVALLETAKDKGVKNVYIHAFLDGRDVAPQSSLEYLETLEKAISDLNYGAIATVSGRFYAMDRDKRWERVEKAYKAIVSAEGEKFEDPIELVKASYANDKNDEFVVPAIITKDGKPVATVKDNDAVIFFNFRPDRAIQLSNAFTDKEWDHFDRGANHPKNIKFVTMTLYNPSIDAEVAFEPIEMKNVIGEVLSNEGLSQLRIAETEKYPHVTFFMNGGRNEEFPGENRILINSPKVETYDLKPEMSAYEVTDALVEDIKNDKHDAIILNFANPDMVGHSGMLEPTIKAIEAVDENLGRVVDLILEKGGSAIIFADHGNSETMSTPEGKPHTAHTTVPVPVIVTKKGVTLREGGRLADVAPTMLDLLGVKKPAEMTGESLIQK</sequence>
<comment type="function">
    <text evidence="1">Catalyzes the interconversion of 2-phosphoglycerate and 3-phosphoglycerate.</text>
</comment>
<comment type="catalytic activity">
    <reaction evidence="1">
        <text>(2R)-2-phosphoglycerate = (2R)-3-phosphoglycerate</text>
        <dbReference type="Rhea" id="RHEA:15901"/>
        <dbReference type="ChEBI" id="CHEBI:58272"/>
        <dbReference type="ChEBI" id="CHEBI:58289"/>
        <dbReference type="EC" id="5.4.2.12"/>
    </reaction>
</comment>
<comment type="cofactor">
    <cofactor evidence="1">
        <name>Mn(2+)</name>
        <dbReference type="ChEBI" id="CHEBI:29035"/>
    </cofactor>
    <text evidence="1">Binds 2 manganese ions per subunit.</text>
</comment>
<comment type="pathway">
    <text evidence="1">Carbohydrate degradation; glycolysis; pyruvate from D-glyceraldehyde 3-phosphate: step 3/5.</text>
</comment>
<comment type="subunit">
    <text evidence="1">Monomer.</text>
</comment>
<comment type="similarity">
    <text evidence="1">Belongs to the BPG-independent phosphoglycerate mutase family.</text>
</comment>
<name>GPMI_LISIN</name>
<feature type="chain" id="PRO_0000212162" description="2,3-bisphosphoglycerate-independent phosphoglycerate mutase">
    <location>
        <begin position="1"/>
        <end position="510"/>
    </location>
</feature>
<feature type="active site" description="Phosphoserine intermediate" evidence="1">
    <location>
        <position position="62"/>
    </location>
</feature>
<feature type="binding site" evidence="1">
    <location>
        <position position="12"/>
    </location>
    <ligand>
        <name>Mn(2+)</name>
        <dbReference type="ChEBI" id="CHEBI:29035"/>
        <label>2</label>
    </ligand>
</feature>
<feature type="binding site" evidence="1">
    <location>
        <position position="62"/>
    </location>
    <ligand>
        <name>Mn(2+)</name>
        <dbReference type="ChEBI" id="CHEBI:29035"/>
        <label>2</label>
    </ligand>
</feature>
<feature type="binding site" evidence="1">
    <location>
        <position position="123"/>
    </location>
    <ligand>
        <name>substrate</name>
    </ligand>
</feature>
<feature type="binding site" evidence="1">
    <location>
        <begin position="153"/>
        <end position="154"/>
    </location>
    <ligand>
        <name>substrate</name>
    </ligand>
</feature>
<feature type="binding site" evidence="1">
    <location>
        <position position="185"/>
    </location>
    <ligand>
        <name>substrate</name>
    </ligand>
</feature>
<feature type="binding site" evidence="1">
    <location>
        <position position="191"/>
    </location>
    <ligand>
        <name>substrate</name>
    </ligand>
</feature>
<feature type="binding site" evidence="1">
    <location>
        <begin position="260"/>
        <end position="263"/>
    </location>
    <ligand>
        <name>substrate</name>
    </ligand>
</feature>
<feature type="binding site" evidence="1">
    <location>
        <position position="335"/>
    </location>
    <ligand>
        <name>substrate</name>
    </ligand>
</feature>
<feature type="binding site" evidence="1">
    <location>
        <position position="402"/>
    </location>
    <ligand>
        <name>Mn(2+)</name>
        <dbReference type="ChEBI" id="CHEBI:29035"/>
        <label>1</label>
    </ligand>
</feature>
<feature type="binding site" evidence="1">
    <location>
        <position position="406"/>
    </location>
    <ligand>
        <name>Mn(2+)</name>
        <dbReference type="ChEBI" id="CHEBI:29035"/>
        <label>1</label>
    </ligand>
</feature>
<feature type="binding site" evidence="1">
    <location>
        <position position="443"/>
    </location>
    <ligand>
        <name>Mn(2+)</name>
        <dbReference type="ChEBI" id="CHEBI:29035"/>
        <label>2</label>
    </ligand>
</feature>
<feature type="binding site" evidence="1">
    <location>
        <position position="444"/>
    </location>
    <ligand>
        <name>Mn(2+)</name>
        <dbReference type="ChEBI" id="CHEBI:29035"/>
        <label>2</label>
    </ligand>
</feature>
<feature type="binding site" evidence="1">
    <location>
        <position position="461"/>
    </location>
    <ligand>
        <name>Mn(2+)</name>
        <dbReference type="ChEBI" id="CHEBI:29035"/>
        <label>1</label>
    </ligand>
</feature>
<reference key="1">
    <citation type="journal article" date="2001" name="Science">
        <title>Comparative genomics of Listeria species.</title>
        <authorList>
            <person name="Glaser P."/>
            <person name="Frangeul L."/>
            <person name="Buchrieser C."/>
            <person name="Rusniok C."/>
            <person name="Amend A."/>
            <person name="Baquero F."/>
            <person name="Berche P."/>
            <person name="Bloecker H."/>
            <person name="Brandt P."/>
            <person name="Chakraborty T."/>
            <person name="Charbit A."/>
            <person name="Chetouani F."/>
            <person name="Couve E."/>
            <person name="de Daruvar A."/>
            <person name="Dehoux P."/>
            <person name="Domann E."/>
            <person name="Dominguez-Bernal G."/>
            <person name="Duchaud E."/>
            <person name="Durant L."/>
            <person name="Dussurget O."/>
            <person name="Entian K.-D."/>
            <person name="Fsihi H."/>
            <person name="Garcia-del Portillo F."/>
            <person name="Garrido P."/>
            <person name="Gautier L."/>
            <person name="Goebel W."/>
            <person name="Gomez-Lopez N."/>
            <person name="Hain T."/>
            <person name="Hauf J."/>
            <person name="Jackson D."/>
            <person name="Jones L.-M."/>
            <person name="Kaerst U."/>
            <person name="Kreft J."/>
            <person name="Kuhn M."/>
            <person name="Kunst F."/>
            <person name="Kurapkat G."/>
            <person name="Madueno E."/>
            <person name="Maitournam A."/>
            <person name="Mata Vicente J."/>
            <person name="Ng E."/>
            <person name="Nedjari H."/>
            <person name="Nordsiek G."/>
            <person name="Novella S."/>
            <person name="de Pablos B."/>
            <person name="Perez-Diaz J.-C."/>
            <person name="Purcell R."/>
            <person name="Remmel B."/>
            <person name="Rose M."/>
            <person name="Schlueter T."/>
            <person name="Simoes N."/>
            <person name="Tierrez A."/>
            <person name="Vazquez-Boland J.-A."/>
            <person name="Voss H."/>
            <person name="Wehland J."/>
            <person name="Cossart P."/>
        </authorList>
    </citation>
    <scope>NUCLEOTIDE SEQUENCE [LARGE SCALE GENOMIC DNA]</scope>
    <source>
        <strain>ATCC BAA-680 / CLIP 11262</strain>
    </source>
</reference>
<organism>
    <name type="scientific">Listeria innocua serovar 6a (strain ATCC BAA-680 / CLIP 11262)</name>
    <dbReference type="NCBI Taxonomy" id="272626"/>
    <lineage>
        <taxon>Bacteria</taxon>
        <taxon>Bacillati</taxon>
        <taxon>Bacillota</taxon>
        <taxon>Bacilli</taxon>
        <taxon>Bacillales</taxon>
        <taxon>Listeriaceae</taxon>
        <taxon>Listeria</taxon>
    </lineage>
</organism>
<evidence type="ECO:0000255" key="1">
    <source>
        <dbReference type="HAMAP-Rule" id="MF_01038"/>
    </source>
</evidence>
<protein>
    <recommendedName>
        <fullName evidence="1">2,3-bisphosphoglycerate-independent phosphoglycerate mutase</fullName>
        <shortName evidence="1">BPG-independent PGAM</shortName>
        <shortName evidence="1">Phosphoglyceromutase</shortName>
        <shortName evidence="1">iPGM</shortName>
        <ecNumber evidence="1">5.4.2.12</ecNumber>
    </recommendedName>
</protein>
<keyword id="KW-0324">Glycolysis</keyword>
<keyword id="KW-0413">Isomerase</keyword>
<keyword id="KW-0464">Manganese</keyword>
<keyword id="KW-0479">Metal-binding</keyword>
<proteinExistence type="inferred from homology"/>
<accession>Q928I2</accession>
<dbReference type="EC" id="5.4.2.12" evidence="1"/>
<dbReference type="EMBL" id="AL596172">
    <property type="protein sequence ID" value="CAC97777.1"/>
    <property type="molecule type" value="Genomic_DNA"/>
</dbReference>
<dbReference type="PIR" id="AI1750">
    <property type="entry name" value="AI1750"/>
</dbReference>
<dbReference type="RefSeq" id="WP_010991253.1">
    <property type="nucleotide sequence ID" value="NC_003212.1"/>
</dbReference>
<dbReference type="SMR" id="Q928I2"/>
<dbReference type="STRING" id="272626.gene:17566930"/>
<dbReference type="KEGG" id="lin:pgm"/>
<dbReference type="eggNOG" id="COG0696">
    <property type="taxonomic scope" value="Bacteria"/>
</dbReference>
<dbReference type="HOGENOM" id="CLU_026099_2_0_9"/>
<dbReference type="OrthoDB" id="9800863at2"/>
<dbReference type="UniPathway" id="UPA00109">
    <property type="reaction ID" value="UER00186"/>
</dbReference>
<dbReference type="Proteomes" id="UP000002513">
    <property type="component" value="Chromosome"/>
</dbReference>
<dbReference type="GO" id="GO:0005829">
    <property type="term" value="C:cytosol"/>
    <property type="evidence" value="ECO:0007669"/>
    <property type="project" value="TreeGrafter"/>
</dbReference>
<dbReference type="GO" id="GO:0030145">
    <property type="term" value="F:manganese ion binding"/>
    <property type="evidence" value="ECO:0007669"/>
    <property type="project" value="UniProtKB-UniRule"/>
</dbReference>
<dbReference type="GO" id="GO:0004619">
    <property type="term" value="F:phosphoglycerate mutase activity"/>
    <property type="evidence" value="ECO:0007669"/>
    <property type="project" value="UniProtKB-EC"/>
</dbReference>
<dbReference type="GO" id="GO:0006007">
    <property type="term" value="P:glucose catabolic process"/>
    <property type="evidence" value="ECO:0007669"/>
    <property type="project" value="InterPro"/>
</dbReference>
<dbReference type="GO" id="GO:0006096">
    <property type="term" value="P:glycolytic process"/>
    <property type="evidence" value="ECO:0007669"/>
    <property type="project" value="UniProtKB-UniRule"/>
</dbReference>
<dbReference type="CDD" id="cd16010">
    <property type="entry name" value="iPGM"/>
    <property type="match status" value="1"/>
</dbReference>
<dbReference type="FunFam" id="3.40.1450.10:FF:000001">
    <property type="entry name" value="2,3-bisphosphoglycerate-independent phosphoglycerate mutase"/>
    <property type="match status" value="1"/>
</dbReference>
<dbReference type="FunFam" id="3.40.720.10:FF:000001">
    <property type="entry name" value="2,3-bisphosphoglycerate-independent phosphoglycerate mutase"/>
    <property type="match status" value="1"/>
</dbReference>
<dbReference type="Gene3D" id="3.40.720.10">
    <property type="entry name" value="Alkaline Phosphatase, subunit A"/>
    <property type="match status" value="1"/>
</dbReference>
<dbReference type="Gene3D" id="3.40.1450.10">
    <property type="entry name" value="BPG-independent phosphoglycerate mutase, domain B"/>
    <property type="match status" value="1"/>
</dbReference>
<dbReference type="HAMAP" id="MF_01038">
    <property type="entry name" value="GpmI"/>
    <property type="match status" value="1"/>
</dbReference>
<dbReference type="InterPro" id="IPR017850">
    <property type="entry name" value="Alkaline_phosphatase_core_sf"/>
</dbReference>
<dbReference type="InterPro" id="IPR011258">
    <property type="entry name" value="BPG-indep_PGM_N"/>
</dbReference>
<dbReference type="InterPro" id="IPR006124">
    <property type="entry name" value="Metalloenzyme"/>
</dbReference>
<dbReference type="InterPro" id="IPR036646">
    <property type="entry name" value="PGAM_B_sf"/>
</dbReference>
<dbReference type="InterPro" id="IPR005995">
    <property type="entry name" value="Pgm_bpd_ind"/>
</dbReference>
<dbReference type="NCBIfam" id="TIGR01307">
    <property type="entry name" value="pgm_bpd_ind"/>
    <property type="match status" value="1"/>
</dbReference>
<dbReference type="PANTHER" id="PTHR31637">
    <property type="entry name" value="2,3-BISPHOSPHOGLYCERATE-INDEPENDENT PHOSPHOGLYCERATE MUTASE"/>
    <property type="match status" value="1"/>
</dbReference>
<dbReference type="PANTHER" id="PTHR31637:SF0">
    <property type="entry name" value="2,3-BISPHOSPHOGLYCERATE-INDEPENDENT PHOSPHOGLYCERATE MUTASE"/>
    <property type="match status" value="1"/>
</dbReference>
<dbReference type="Pfam" id="PF06415">
    <property type="entry name" value="iPGM_N"/>
    <property type="match status" value="1"/>
</dbReference>
<dbReference type="Pfam" id="PF01676">
    <property type="entry name" value="Metalloenzyme"/>
    <property type="match status" value="1"/>
</dbReference>
<dbReference type="PIRSF" id="PIRSF001492">
    <property type="entry name" value="IPGAM"/>
    <property type="match status" value="1"/>
</dbReference>
<dbReference type="SUPFAM" id="SSF64158">
    <property type="entry name" value="2,3-Bisphosphoglycerate-independent phosphoglycerate mutase, substrate-binding domain"/>
    <property type="match status" value="1"/>
</dbReference>
<dbReference type="SUPFAM" id="SSF53649">
    <property type="entry name" value="Alkaline phosphatase-like"/>
    <property type="match status" value="1"/>
</dbReference>